<reference key="1">
    <citation type="journal article" date="2022" name="J. Infect. Dis.">
        <title>Exportation of Monkeypox virus from the African continent.</title>
        <authorList>
            <person name="Mauldin M.R."/>
            <person name="McCollum A.M."/>
            <person name="Nakazawa Y.J."/>
            <person name="Mandra A."/>
            <person name="Whitehouse E.R."/>
            <person name="Davidson W."/>
            <person name="Zhao H."/>
            <person name="Gao J."/>
            <person name="Li Y."/>
            <person name="Doty J."/>
            <person name="Yinka-Ogunleye A."/>
            <person name="Akinpelu A."/>
            <person name="Aruna O."/>
            <person name="Naidoo D."/>
            <person name="Lewandowski K."/>
            <person name="Afrough B."/>
            <person name="Graham V."/>
            <person name="Aarons E."/>
            <person name="Hewson R."/>
            <person name="Vipond R."/>
            <person name="Dunning J."/>
            <person name="Chand M."/>
            <person name="Brown C."/>
            <person name="Cohen-Gihon I."/>
            <person name="Erez N."/>
            <person name="Shifman O."/>
            <person name="Israeli O."/>
            <person name="Sharon M."/>
            <person name="Schwartz E."/>
            <person name="Beth-Din A."/>
            <person name="Zvi A."/>
            <person name="Mak T.M."/>
            <person name="Ng Y.K."/>
            <person name="Cui L."/>
            <person name="Lin R.T.P."/>
            <person name="Olson V.A."/>
            <person name="Brooks T."/>
            <person name="Paran N."/>
            <person name="Ihekweazu C."/>
            <person name="Reynolds M.G."/>
        </authorList>
    </citation>
    <scope>NUCLEOTIDE SEQUENCE [LARGE SCALE GENOMIC DNA]</scope>
    <source>
        <strain>MPXV-M5312_HM12_Rivers</strain>
    </source>
</reference>
<dbReference type="EC" id="2.7.7.6"/>
<dbReference type="EMBL" id="MT903340">
    <property type="protein sequence ID" value="QNP13006.1"/>
    <property type="molecule type" value="Genomic_DNA"/>
</dbReference>
<dbReference type="RefSeq" id="YP_010377133.1">
    <property type="nucleotide sequence ID" value="NC_063383.1"/>
</dbReference>
<dbReference type="SMR" id="A0A7H0DNC3"/>
<dbReference type="GeneID" id="72551546"/>
<dbReference type="Proteomes" id="UP000516359">
    <property type="component" value="Genome"/>
</dbReference>
<dbReference type="GO" id="GO:0000428">
    <property type="term" value="C:DNA-directed RNA polymerase complex"/>
    <property type="evidence" value="ECO:0007669"/>
    <property type="project" value="UniProtKB-KW"/>
</dbReference>
<dbReference type="GO" id="GO:0044423">
    <property type="term" value="C:virion component"/>
    <property type="evidence" value="ECO:0007669"/>
    <property type="project" value="UniProtKB-KW"/>
</dbReference>
<dbReference type="GO" id="GO:0003677">
    <property type="term" value="F:DNA binding"/>
    <property type="evidence" value="ECO:0007669"/>
    <property type="project" value="InterPro"/>
</dbReference>
<dbReference type="GO" id="GO:0003899">
    <property type="term" value="F:DNA-directed RNA polymerase activity"/>
    <property type="evidence" value="ECO:0007669"/>
    <property type="project" value="InterPro"/>
</dbReference>
<dbReference type="GO" id="GO:0046872">
    <property type="term" value="F:metal ion binding"/>
    <property type="evidence" value="ECO:0007669"/>
    <property type="project" value="UniProtKB-KW"/>
</dbReference>
<dbReference type="GO" id="GO:0032549">
    <property type="term" value="F:ribonucleoside binding"/>
    <property type="evidence" value="ECO:0007669"/>
    <property type="project" value="InterPro"/>
</dbReference>
<dbReference type="GO" id="GO:0006351">
    <property type="term" value="P:DNA-templated transcription"/>
    <property type="evidence" value="ECO:0007669"/>
    <property type="project" value="InterPro"/>
</dbReference>
<dbReference type="Gene3D" id="2.40.50.150">
    <property type="match status" value="1"/>
</dbReference>
<dbReference type="Gene3D" id="3.90.1100.10">
    <property type="match status" value="2"/>
</dbReference>
<dbReference type="Gene3D" id="2.40.270.10">
    <property type="entry name" value="DNA-directed RNA polymerase, subunit 2, domain 6"/>
    <property type="match status" value="1"/>
</dbReference>
<dbReference type="Gene3D" id="3.90.1800.10">
    <property type="entry name" value="RNA polymerase alpha subunit dimerisation domain"/>
    <property type="match status" value="1"/>
</dbReference>
<dbReference type="InterPro" id="IPR015712">
    <property type="entry name" value="DNA-dir_RNA_pol_su2"/>
</dbReference>
<dbReference type="InterPro" id="IPR007120">
    <property type="entry name" value="DNA-dir_RNAP_su2_dom"/>
</dbReference>
<dbReference type="InterPro" id="IPR037033">
    <property type="entry name" value="DNA-dir_RNAP_su2_hyb_sf"/>
</dbReference>
<dbReference type="InterPro" id="IPR024390">
    <property type="entry name" value="RNA_pol_132_poxvirus"/>
</dbReference>
<dbReference type="InterPro" id="IPR007121">
    <property type="entry name" value="RNA_pol_bsu_CS"/>
</dbReference>
<dbReference type="InterPro" id="IPR007645">
    <property type="entry name" value="RNA_pol_Rpb2_3"/>
</dbReference>
<dbReference type="InterPro" id="IPR007647">
    <property type="entry name" value="RNA_pol_Rpb2_5"/>
</dbReference>
<dbReference type="InterPro" id="IPR007641">
    <property type="entry name" value="RNA_pol_Rpb2_7"/>
</dbReference>
<dbReference type="InterPro" id="IPR014724">
    <property type="entry name" value="RNA_pol_RPB2_OB-fold"/>
</dbReference>
<dbReference type="PANTHER" id="PTHR20856">
    <property type="entry name" value="DNA-DIRECTED RNA POLYMERASE I SUBUNIT 2"/>
    <property type="match status" value="1"/>
</dbReference>
<dbReference type="Pfam" id="PF04565">
    <property type="entry name" value="RNA_pol_Rpb2_3"/>
    <property type="match status" value="1"/>
</dbReference>
<dbReference type="Pfam" id="PF04567">
    <property type="entry name" value="RNA_pol_Rpb2_5"/>
    <property type="match status" value="1"/>
</dbReference>
<dbReference type="Pfam" id="PF00562">
    <property type="entry name" value="RNA_pol_Rpb2_6"/>
    <property type="match status" value="1"/>
</dbReference>
<dbReference type="Pfam" id="PF04560">
    <property type="entry name" value="RNA_pol_Rpb2_7"/>
    <property type="match status" value="1"/>
</dbReference>
<dbReference type="Pfam" id="PF12415">
    <property type="entry name" value="rpo132"/>
    <property type="match status" value="1"/>
</dbReference>
<dbReference type="SUPFAM" id="SSF64484">
    <property type="entry name" value="beta and beta-prime subunits of DNA dependent RNA-polymerase"/>
    <property type="match status" value="1"/>
</dbReference>
<dbReference type="PROSITE" id="PS01166">
    <property type="entry name" value="RNA_POL_BETA"/>
    <property type="match status" value="1"/>
</dbReference>
<evidence type="ECO:0000250" key="1">
    <source>
        <dbReference type="UniProtKB" id="Q76ZP7"/>
    </source>
</evidence>
<evidence type="ECO:0000305" key="2"/>
<sequence>MKKNTDSEMDQRLGYKFLVPDPKAGVFYRPLHFQYVSYSNFILHRLHEILTVKRPLLSFKNNTERIMIEISNVKVTPPDYSPIIASIKGKSYDALATFTVNIFKEVMTKEGISITKISSYEGKDSHLIKIPLLIGYGNKNPLDTAKYLVPNVIGGVFINKQSVEKVGINLVEKITTWPKFRVVKPNSFTFSFSSVSPPNVLPTRYRHYKISLDISQLEASNISSTKTFITVNIVLLSQYLSRVSLEFIRRSLSYDMPPEVVYLVNAIIDSAKRLTESITDFNIDTYINDLVEAEHIKQKSQLTINEFKYEMLHNFLPHMNYTPDQLKGFYMISLLRKFLYCIYHTSRYPDRDSMVCHRILTYGKYFETLAHDELENYIGNIRNDIMNNHKNRGTYAVNIHVLTTPGLNHAFSSLLSGKFKKSDGSYRTHPHYSWMQNISIPRSVGFYPDQVKISKMFSVRKYHPSQYLYFCSSDVPERGPQVGLVSQLSVLSSITNILTSEYLDLEKKICEYIRSYYKDDISYFETGFPITIENALVASLNPNMICDFVTDFRRRKRMGFFGNLEVGITLVRDHMNEIRINIGAGRLVRPFLVVDNGELMMDVCPELESRLDDMTFSDIQKEFPHVIEMVDIEQFTFSNVCESVQKFRMMSKDERKQYDLCDFPAEFRDGYVASSLVGINHNSGPRAILGCAQAKQAISCLSSDIRNKIDNGIHLMYPERPIVISKALETSKIAANCFGQHVTIALMSYKGINQEDGIIIKKQFIQRGGLDIVTAKKHQVEIPLENFNNKERDRSNAYSKLESNGLVRLNAFLESGDAMARNISSRTLEDDFARDNQISFDVSEKYTDMYKSRVERVQVELTDKVKVRVLTMKERRPILGDKFTTRTSQKGTVAYIADETELPYDENGITPDVIINSTSIFSRKTISMLIEVILTAAYSTKPYNNKGENRPVCFPSSNETSIDAYMQFAKQCYEYSNPKLSEEELSDKIFCEKILYDPETDKPYESKVFFGPIYYLRLRHLTQDKATVRCRGKKTKLIRQANEGRKRGGGIKFGEMERDCLIAHGAANTITEVLKDSEEDYQDVYICENCGDIAAQIKSINTCLRCSKLNLSPLLTKIDTTHVSKVFLTQMNARGVKVKLDFERRPPSFYKPLDKVDLKPSFLV</sequence>
<accession>A0A7H0DNC3</accession>
<keyword id="KW-0240">DNA-directed RNA polymerase</keyword>
<keyword id="KW-0479">Metal-binding</keyword>
<keyword id="KW-0548">Nucleotidyltransferase</keyword>
<keyword id="KW-0597">Phosphoprotein</keyword>
<keyword id="KW-1185">Reference proteome</keyword>
<keyword id="KW-0804">Transcription</keyword>
<keyword id="KW-0808">Transferase</keyword>
<keyword id="KW-0946">Virion</keyword>
<protein>
    <recommendedName>
        <fullName>DNA-directed RNA polymerase</fullName>
        <ecNumber>2.7.7.6</ecNumber>
    </recommendedName>
</protein>
<name>RP132_MONPV</name>
<organism>
    <name type="scientific">Monkeypox virus</name>
    <dbReference type="NCBI Taxonomy" id="10244"/>
    <lineage>
        <taxon>Viruses</taxon>
        <taxon>Varidnaviria</taxon>
        <taxon>Bamfordvirae</taxon>
        <taxon>Nucleocytoviricota</taxon>
        <taxon>Pokkesviricetes</taxon>
        <taxon>Chitovirales</taxon>
        <taxon>Poxviridae</taxon>
        <taxon>Chordopoxvirinae</taxon>
        <taxon>Orthopoxvirus</taxon>
    </lineage>
</organism>
<gene>
    <name type="primary">OPG151</name>
    <name type="synonym">RPO132</name>
    <name type="ORF">MPXVgp135</name>
</gene>
<organismHost>
    <name type="scientific">Cynomys gunnisoni</name>
    <name type="common">Gunnison's prairie dog</name>
    <name type="synonym">Spermophilus gunnisoni</name>
    <dbReference type="NCBI Taxonomy" id="45479"/>
</organismHost>
<organismHost>
    <name type="scientific">Cynomys leucurus</name>
    <name type="common">White-tailed prairie dog</name>
    <dbReference type="NCBI Taxonomy" id="99825"/>
</organismHost>
<organismHost>
    <name type="scientific">Cynomys ludovicianus</name>
    <name type="common">Black-tailed prairie dog</name>
    <dbReference type="NCBI Taxonomy" id="45480"/>
</organismHost>
<organismHost>
    <name type="scientific">Cynomys mexicanus</name>
    <name type="common">Mexican prairie dog</name>
    <dbReference type="NCBI Taxonomy" id="99826"/>
</organismHost>
<organismHost>
    <name type="scientific">Cynomys parvidens</name>
    <name type="common">Utah prairie dog</name>
    <dbReference type="NCBI Taxonomy" id="99827"/>
</organismHost>
<organismHost>
    <name type="scientific">Gliridae</name>
    <name type="common">dormice</name>
    <dbReference type="NCBI Taxonomy" id="30650"/>
</organismHost>
<organismHost>
    <name type="scientific">Heliosciurus ruwenzorii</name>
    <name type="common">Ruwenzori sun squirrel</name>
    <dbReference type="NCBI Taxonomy" id="226685"/>
</organismHost>
<organismHost>
    <name type="scientific">Homo sapiens</name>
    <name type="common">Human</name>
    <dbReference type="NCBI Taxonomy" id="9606"/>
</organismHost>
<organismHost>
    <name type="scientific">Mus musculus</name>
    <name type="common">Mouse</name>
    <dbReference type="NCBI Taxonomy" id="10090"/>
</organismHost>
<proteinExistence type="inferred from homology"/>
<comment type="function">
    <text evidence="1">Part of the DNA-dependent RNA polymerase which catalyzes the transcription of viral DNA into RNA using the four ribonucleoside triphosphates as substrates. Responsible for the transcription of early, intermediate and late genes. DNA-dependent RNA polymerase associates with the early transcription factor (ETF), itself composed of OPG118 and OPG133, thereby allowing the early genes transcription. Late transcription, and probably also intermediate transcription, require newly synthesized RNA polymerase.</text>
</comment>
<comment type="catalytic activity">
    <reaction evidence="1">
        <text>RNA(n) + a ribonucleoside 5'-triphosphate = RNA(n+1) + diphosphate</text>
        <dbReference type="Rhea" id="RHEA:21248"/>
        <dbReference type="Rhea" id="RHEA-COMP:14527"/>
        <dbReference type="Rhea" id="RHEA-COMP:17342"/>
        <dbReference type="ChEBI" id="CHEBI:33019"/>
        <dbReference type="ChEBI" id="CHEBI:61557"/>
        <dbReference type="ChEBI" id="CHEBI:140395"/>
        <dbReference type="EC" id="2.7.7.6"/>
    </reaction>
</comment>
<comment type="subunit">
    <text evidence="1">The DNA-dependent RNA polymerase used for intermediate and late genes expression consists of eight subunits 147 kDa, 133 kDa, 35 kDa, 30 kDa, 22 kDa, 19 kDa, 18 kDa and 7 kDa totalling more than 500 kDa in mass. The same holoenzyme, with the addition of the transcription-specificity factor RAP94, is used for early gene expression.</text>
</comment>
<comment type="subcellular location">
    <subcellularLocation>
        <location evidence="1">Virion</location>
    </subcellularLocation>
    <text evidence="1">All the enzymes and other proteins required to synthesize early mRNAs are packaged within the virion core along with the DNA genome. This is necessary because viral early mRNAs are synthesized within minutes after virus entry into the cell and are extruded through pores in the core particle.</text>
</comment>
<comment type="similarity">
    <text evidence="2">Belongs to the RNA polymerase beta chain family.</text>
</comment>
<feature type="chain" id="PRO_0000457550" description="DNA-directed RNA polymerase">
    <location>
        <begin position="1"/>
        <end position="1164"/>
    </location>
</feature>